<protein>
    <recommendedName>
        <fullName evidence="1">ATP synthase subunit alpha</fullName>
        <ecNumber evidence="1">7.1.2.2</ecNumber>
    </recommendedName>
    <alternativeName>
        <fullName evidence="1">ATP synthase F1 sector subunit alpha</fullName>
    </alternativeName>
    <alternativeName>
        <fullName evidence="1">F-ATPase subunit alpha</fullName>
    </alternativeName>
</protein>
<sequence length="545" mass="58878">MADISISPDEIRDALKDFVSKYEPAKAATAEVGHVLDASDGIAHVEGLPGVMANELIRFADGTLGLAQNLDENEIGVVVLGEFEGIVEGMEVTRTGEVLSVPVGDGYLGRVVDPLGNPIDGLGEIATEGRRELELQAPGVMHRKSVHEPLQTGIKAIDAMIPVGRGQRQLIIGDRQTGKTAIAIDTIINQKANWESGDVTKQVRCIYVAVGQKGSTIAAVKGALEDAGAMEYTTIVAAPASDPAGFKYLAPYTGSAIGQHWMYGGKHVLIIFDDLSKQAEAYRAVSLLLRRPPGREAYPGDVFYLHSRLLERCAKLSDELGAGSMTGLPIIETKANDVSAYIPTNVISITDGQIFLQSDLFNANQRPAVDVGISVSRVGGDAQVKSIKKVSGTLKLELAQYRSLEAFAMFASDLDAASRRQLARGARLTELLKQPQYSPYPVEEQVVSIWAGINGKLDEVAVEDVLRFESELLDHLRRNTGILTTLRDTNVLDDETVEKLSSEVDAFKLEFQTGEGKPLAAVGREDFDAIAEEDVNQERIVKAKR</sequence>
<organism>
    <name type="scientific">Leifsonia xyli subsp. xyli (strain CTCB07)</name>
    <dbReference type="NCBI Taxonomy" id="281090"/>
    <lineage>
        <taxon>Bacteria</taxon>
        <taxon>Bacillati</taxon>
        <taxon>Actinomycetota</taxon>
        <taxon>Actinomycetes</taxon>
        <taxon>Micrococcales</taxon>
        <taxon>Microbacteriaceae</taxon>
        <taxon>Leifsonia</taxon>
    </lineage>
</organism>
<feature type="chain" id="PRO_0000238274" description="ATP synthase subunit alpha">
    <location>
        <begin position="1"/>
        <end position="545"/>
    </location>
</feature>
<feature type="binding site" evidence="1">
    <location>
        <begin position="173"/>
        <end position="180"/>
    </location>
    <ligand>
        <name>ATP</name>
        <dbReference type="ChEBI" id="CHEBI:30616"/>
    </ligand>
</feature>
<feature type="site" description="Required for activity" evidence="1">
    <location>
        <position position="374"/>
    </location>
</feature>
<proteinExistence type="inferred from homology"/>
<comment type="function">
    <text evidence="1">Produces ATP from ADP in the presence of a proton gradient across the membrane. The alpha chain is a regulatory subunit.</text>
</comment>
<comment type="catalytic activity">
    <reaction evidence="1">
        <text>ATP + H2O + 4 H(+)(in) = ADP + phosphate + 5 H(+)(out)</text>
        <dbReference type="Rhea" id="RHEA:57720"/>
        <dbReference type="ChEBI" id="CHEBI:15377"/>
        <dbReference type="ChEBI" id="CHEBI:15378"/>
        <dbReference type="ChEBI" id="CHEBI:30616"/>
        <dbReference type="ChEBI" id="CHEBI:43474"/>
        <dbReference type="ChEBI" id="CHEBI:456216"/>
        <dbReference type="EC" id="7.1.2.2"/>
    </reaction>
</comment>
<comment type="subunit">
    <text evidence="1">F-type ATPases have 2 components, CF(1) - the catalytic core - and CF(0) - the membrane proton channel. CF(1) has five subunits: alpha(3), beta(3), gamma(1), delta(1), epsilon(1). CF(0) has three main subunits: a(1), b(2) and c(9-12). The alpha and beta chains form an alternating ring which encloses part of the gamma chain. CF(1) is attached to CF(0) by a central stalk formed by the gamma and epsilon chains, while a peripheral stalk is formed by the delta and b chains.</text>
</comment>
<comment type="subcellular location">
    <subcellularLocation>
        <location evidence="1">Cell membrane</location>
        <topology evidence="1">Peripheral membrane protein</topology>
    </subcellularLocation>
</comment>
<comment type="similarity">
    <text evidence="1">Belongs to the ATPase alpha/beta chains family.</text>
</comment>
<dbReference type="EC" id="7.1.2.2" evidence="1"/>
<dbReference type="EMBL" id="AE016822">
    <property type="protein sequence ID" value="AAT88635.1"/>
    <property type="molecule type" value="Genomic_DNA"/>
</dbReference>
<dbReference type="RefSeq" id="WP_011185634.1">
    <property type="nucleotide sequence ID" value="NC_006087.1"/>
</dbReference>
<dbReference type="SMR" id="Q6AG60"/>
<dbReference type="STRING" id="281090.Lxx07030"/>
<dbReference type="KEGG" id="lxx:Lxx07030"/>
<dbReference type="eggNOG" id="COG0056">
    <property type="taxonomic scope" value="Bacteria"/>
</dbReference>
<dbReference type="HOGENOM" id="CLU_010091_2_1_11"/>
<dbReference type="Proteomes" id="UP000001306">
    <property type="component" value="Chromosome"/>
</dbReference>
<dbReference type="GO" id="GO:0005886">
    <property type="term" value="C:plasma membrane"/>
    <property type="evidence" value="ECO:0007669"/>
    <property type="project" value="UniProtKB-SubCell"/>
</dbReference>
<dbReference type="GO" id="GO:0045259">
    <property type="term" value="C:proton-transporting ATP synthase complex"/>
    <property type="evidence" value="ECO:0007669"/>
    <property type="project" value="UniProtKB-KW"/>
</dbReference>
<dbReference type="GO" id="GO:0043531">
    <property type="term" value="F:ADP binding"/>
    <property type="evidence" value="ECO:0007669"/>
    <property type="project" value="TreeGrafter"/>
</dbReference>
<dbReference type="GO" id="GO:0005524">
    <property type="term" value="F:ATP binding"/>
    <property type="evidence" value="ECO:0007669"/>
    <property type="project" value="UniProtKB-UniRule"/>
</dbReference>
<dbReference type="GO" id="GO:0046933">
    <property type="term" value="F:proton-transporting ATP synthase activity, rotational mechanism"/>
    <property type="evidence" value="ECO:0007669"/>
    <property type="project" value="UniProtKB-UniRule"/>
</dbReference>
<dbReference type="CDD" id="cd18113">
    <property type="entry name" value="ATP-synt_F1_alpha_C"/>
    <property type="match status" value="1"/>
</dbReference>
<dbReference type="CDD" id="cd18116">
    <property type="entry name" value="ATP-synt_F1_alpha_N"/>
    <property type="match status" value="1"/>
</dbReference>
<dbReference type="CDD" id="cd01132">
    <property type="entry name" value="F1-ATPase_alpha_CD"/>
    <property type="match status" value="1"/>
</dbReference>
<dbReference type="FunFam" id="1.20.150.20:FF:000001">
    <property type="entry name" value="ATP synthase subunit alpha"/>
    <property type="match status" value="1"/>
</dbReference>
<dbReference type="FunFam" id="3.40.50.300:FF:000002">
    <property type="entry name" value="ATP synthase subunit alpha"/>
    <property type="match status" value="1"/>
</dbReference>
<dbReference type="Gene3D" id="2.40.30.20">
    <property type="match status" value="1"/>
</dbReference>
<dbReference type="Gene3D" id="1.20.150.20">
    <property type="entry name" value="ATP synthase alpha/beta chain, C-terminal domain"/>
    <property type="match status" value="1"/>
</dbReference>
<dbReference type="Gene3D" id="3.40.50.300">
    <property type="entry name" value="P-loop containing nucleotide triphosphate hydrolases"/>
    <property type="match status" value="1"/>
</dbReference>
<dbReference type="HAMAP" id="MF_01346">
    <property type="entry name" value="ATP_synth_alpha_bact"/>
    <property type="match status" value="1"/>
</dbReference>
<dbReference type="InterPro" id="IPR023366">
    <property type="entry name" value="ATP_synth_asu-like_sf"/>
</dbReference>
<dbReference type="InterPro" id="IPR000793">
    <property type="entry name" value="ATP_synth_asu_C"/>
</dbReference>
<dbReference type="InterPro" id="IPR038376">
    <property type="entry name" value="ATP_synth_asu_C_sf"/>
</dbReference>
<dbReference type="InterPro" id="IPR033732">
    <property type="entry name" value="ATP_synth_F1_a_nt-bd_dom"/>
</dbReference>
<dbReference type="InterPro" id="IPR005294">
    <property type="entry name" value="ATP_synth_F1_asu"/>
</dbReference>
<dbReference type="InterPro" id="IPR020003">
    <property type="entry name" value="ATPase_a/bsu_AS"/>
</dbReference>
<dbReference type="InterPro" id="IPR004100">
    <property type="entry name" value="ATPase_F1/V1/A1_a/bsu_N"/>
</dbReference>
<dbReference type="InterPro" id="IPR036121">
    <property type="entry name" value="ATPase_F1/V1/A1_a/bsu_N_sf"/>
</dbReference>
<dbReference type="InterPro" id="IPR000194">
    <property type="entry name" value="ATPase_F1/V1/A1_a/bsu_nucl-bd"/>
</dbReference>
<dbReference type="InterPro" id="IPR027417">
    <property type="entry name" value="P-loop_NTPase"/>
</dbReference>
<dbReference type="NCBIfam" id="TIGR00962">
    <property type="entry name" value="atpA"/>
    <property type="match status" value="1"/>
</dbReference>
<dbReference type="NCBIfam" id="NF009884">
    <property type="entry name" value="PRK13343.1"/>
    <property type="match status" value="1"/>
</dbReference>
<dbReference type="PANTHER" id="PTHR48082">
    <property type="entry name" value="ATP SYNTHASE SUBUNIT ALPHA, MITOCHONDRIAL"/>
    <property type="match status" value="1"/>
</dbReference>
<dbReference type="PANTHER" id="PTHR48082:SF2">
    <property type="entry name" value="ATP SYNTHASE SUBUNIT ALPHA, MITOCHONDRIAL"/>
    <property type="match status" value="1"/>
</dbReference>
<dbReference type="Pfam" id="PF00006">
    <property type="entry name" value="ATP-synt_ab"/>
    <property type="match status" value="1"/>
</dbReference>
<dbReference type="Pfam" id="PF00306">
    <property type="entry name" value="ATP-synt_ab_C"/>
    <property type="match status" value="1"/>
</dbReference>
<dbReference type="Pfam" id="PF02874">
    <property type="entry name" value="ATP-synt_ab_N"/>
    <property type="match status" value="1"/>
</dbReference>
<dbReference type="SUPFAM" id="SSF47917">
    <property type="entry name" value="C-terminal domain of alpha and beta subunits of F1 ATP synthase"/>
    <property type="match status" value="1"/>
</dbReference>
<dbReference type="SUPFAM" id="SSF50615">
    <property type="entry name" value="N-terminal domain of alpha and beta subunits of F1 ATP synthase"/>
    <property type="match status" value="1"/>
</dbReference>
<dbReference type="SUPFAM" id="SSF52540">
    <property type="entry name" value="P-loop containing nucleoside triphosphate hydrolases"/>
    <property type="match status" value="1"/>
</dbReference>
<dbReference type="PROSITE" id="PS00152">
    <property type="entry name" value="ATPASE_ALPHA_BETA"/>
    <property type="match status" value="1"/>
</dbReference>
<gene>
    <name evidence="1" type="primary">atpA</name>
    <name type="ordered locus">Lxx07030</name>
</gene>
<evidence type="ECO:0000255" key="1">
    <source>
        <dbReference type="HAMAP-Rule" id="MF_01346"/>
    </source>
</evidence>
<reference key="1">
    <citation type="journal article" date="2004" name="Mol. Plant Microbe Interact.">
        <title>The genome sequence of the Gram-positive sugarcane pathogen Leifsonia xyli subsp. xyli.</title>
        <authorList>
            <person name="Monteiro-Vitorello C.B."/>
            <person name="Camargo L.E.A."/>
            <person name="Van Sluys M.A."/>
            <person name="Kitajima J.P."/>
            <person name="Truffi D."/>
            <person name="do Amaral A.M."/>
            <person name="Harakava R."/>
            <person name="de Oliveira J.C.F."/>
            <person name="Wood D."/>
            <person name="de Oliveira M.C."/>
            <person name="Miyaki C.Y."/>
            <person name="Takita M.A."/>
            <person name="da Silva A.C.R."/>
            <person name="Furlan L.R."/>
            <person name="Carraro D.M."/>
            <person name="Camarotte G."/>
            <person name="Almeida N.F. Jr."/>
            <person name="Carrer H."/>
            <person name="Coutinho L.L."/>
            <person name="El-Dorry H.A."/>
            <person name="Ferro M.I.T."/>
            <person name="Gagliardi P.R."/>
            <person name="Giglioti E."/>
            <person name="Goldman M.H.S."/>
            <person name="Goldman G.H."/>
            <person name="Kimura E.T."/>
            <person name="Ferro E.S."/>
            <person name="Kuramae E.E."/>
            <person name="Lemos E.G.M."/>
            <person name="Lemos M.V.F."/>
            <person name="Mauro S.M.Z."/>
            <person name="Machado M.A."/>
            <person name="Marino C.L."/>
            <person name="Menck C.F."/>
            <person name="Nunes L.R."/>
            <person name="Oliveira R.C."/>
            <person name="Pereira G.G."/>
            <person name="Siqueira W."/>
            <person name="de Souza A.A."/>
            <person name="Tsai S.M."/>
            <person name="Zanca A.S."/>
            <person name="Simpson A.J.G."/>
            <person name="Brumbley S.M."/>
            <person name="Setubal J.C."/>
        </authorList>
    </citation>
    <scope>NUCLEOTIDE SEQUENCE [LARGE SCALE GENOMIC DNA]</scope>
    <source>
        <strain>CTCB07</strain>
    </source>
</reference>
<name>ATPA_LEIXX</name>
<accession>Q6AG60</accession>
<keyword id="KW-0066">ATP synthesis</keyword>
<keyword id="KW-0067">ATP-binding</keyword>
<keyword id="KW-1003">Cell membrane</keyword>
<keyword id="KW-0139">CF(1)</keyword>
<keyword id="KW-0375">Hydrogen ion transport</keyword>
<keyword id="KW-0406">Ion transport</keyword>
<keyword id="KW-0472">Membrane</keyword>
<keyword id="KW-0547">Nucleotide-binding</keyword>
<keyword id="KW-1185">Reference proteome</keyword>
<keyword id="KW-1278">Translocase</keyword>
<keyword id="KW-0813">Transport</keyword>